<reference key="1">
    <citation type="journal article" date="2010" name="J. Bacteriol.">
        <title>Complete genome sequence of Beijerinckia indica subsp. indica.</title>
        <authorList>
            <person name="Tamas I."/>
            <person name="Dedysh S.N."/>
            <person name="Liesack W."/>
            <person name="Stott M.B."/>
            <person name="Alam M."/>
            <person name="Murrell J.C."/>
            <person name="Dunfield P.F."/>
        </authorList>
    </citation>
    <scope>NUCLEOTIDE SEQUENCE [LARGE SCALE GENOMIC DNA]</scope>
    <source>
        <strain>ATCC 9039 / DSM 1715 / NCIMB 8712</strain>
    </source>
</reference>
<protein>
    <recommendedName>
        <fullName evidence="1">Small ribosomal subunit protein uS3</fullName>
    </recommendedName>
    <alternativeName>
        <fullName evidence="3">30S ribosomal protein S3</fullName>
    </alternativeName>
</protein>
<proteinExistence type="inferred from homology"/>
<keyword id="KW-1185">Reference proteome</keyword>
<keyword id="KW-0687">Ribonucleoprotein</keyword>
<keyword id="KW-0689">Ribosomal protein</keyword>
<keyword id="KW-0694">RNA-binding</keyword>
<keyword id="KW-0699">rRNA-binding</keyword>
<sequence>MGQKVNPIGLRLGINRTWDSRWFANKGEYSKLLHEDMRIREVLMKNLKQAAVSKIIIERPHKKCRVTIHSARPGVVIGKKGADIDKIRKLVSKLTDSEVVINIVEVRKPEIDATLVADSIAQQLERRVAFRRAMKRAVQSAIRLGAEGIRINCSGRLGGAEIARLEWYREGRVPLHTLRADVDYGVATAHTAYGTCGIKVWIFKGEILEHDPMAQDRKMAELDHAGGGGGGERRRRERDAA</sequence>
<organism>
    <name type="scientific">Beijerinckia indica subsp. indica (strain ATCC 9039 / DSM 1715 / NCIMB 8712)</name>
    <dbReference type="NCBI Taxonomy" id="395963"/>
    <lineage>
        <taxon>Bacteria</taxon>
        <taxon>Pseudomonadati</taxon>
        <taxon>Pseudomonadota</taxon>
        <taxon>Alphaproteobacteria</taxon>
        <taxon>Hyphomicrobiales</taxon>
        <taxon>Beijerinckiaceae</taxon>
        <taxon>Beijerinckia</taxon>
    </lineage>
</organism>
<accession>B2IK68</accession>
<evidence type="ECO:0000255" key="1">
    <source>
        <dbReference type="HAMAP-Rule" id="MF_01309"/>
    </source>
</evidence>
<evidence type="ECO:0000256" key="2">
    <source>
        <dbReference type="SAM" id="MobiDB-lite"/>
    </source>
</evidence>
<evidence type="ECO:0000305" key="3"/>
<feature type="chain" id="PRO_1000140922" description="Small ribosomal subunit protein uS3">
    <location>
        <begin position="1"/>
        <end position="241"/>
    </location>
</feature>
<feature type="domain" description="KH type-2" evidence="1">
    <location>
        <begin position="39"/>
        <end position="107"/>
    </location>
</feature>
<feature type="region of interest" description="Disordered" evidence="2">
    <location>
        <begin position="219"/>
        <end position="241"/>
    </location>
</feature>
<feature type="compositionally biased region" description="Basic and acidic residues" evidence="2">
    <location>
        <begin position="231"/>
        <end position="241"/>
    </location>
</feature>
<comment type="function">
    <text evidence="1">Binds the lower part of the 30S subunit head. Binds mRNA in the 70S ribosome, positioning it for translation.</text>
</comment>
<comment type="subunit">
    <text evidence="1">Part of the 30S ribosomal subunit. Forms a tight complex with proteins S10 and S14.</text>
</comment>
<comment type="similarity">
    <text evidence="1">Belongs to the universal ribosomal protein uS3 family.</text>
</comment>
<name>RS3_BEII9</name>
<gene>
    <name evidence="1" type="primary">rpsC</name>
    <name type="ordered locus">Bind_1360</name>
</gene>
<dbReference type="EMBL" id="CP001016">
    <property type="protein sequence ID" value="ACB95000.1"/>
    <property type="molecule type" value="Genomic_DNA"/>
</dbReference>
<dbReference type="RefSeq" id="WP_012384357.1">
    <property type="nucleotide sequence ID" value="NC_010581.1"/>
</dbReference>
<dbReference type="SMR" id="B2IK68"/>
<dbReference type="STRING" id="395963.Bind_1360"/>
<dbReference type="KEGG" id="bid:Bind_1360"/>
<dbReference type="eggNOG" id="COG0092">
    <property type="taxonomic scope" value="Bacteria"/>
</dbReference>
<dbReference type="HOGENOM" id="CLU_058591_0_2_5"/>
<dbReference type="OrthoDB" id="9806396at2"/>
<dbReference type="Proteomes" id="UP000001695">
    <property type="component" value="Chromosome"/>
</dbReference>
<dbReference type="GO" id="GO:0022627">
    <property type="term" value="C:cytosolic small ribosomal subunit"/>
    <property type="evidence" value="ECO:0007669"/>
    <property type="project" value="TreeGrafter"/>
</dbReference>
<dbReference type="GO" id="GO:0003729">
    <property type="term" value="F:mRNA binding"/>
    <property type="evidence" value="ECO:0007669"/>
    <property type="project" value="UniProtKB-UniRule"/>
</dbReference>
<dbReference type="GO" id="GO:0019843">
    <property type="term" value="F:rRNA binding"/>
    <property type="evidence" value="ECO:0007669"/>
    <property type="project" value="UniProtKB-UniRule"/>
</dbReference>
<dbReference type="GO" id="GO:0003735">
    <property type="term" value="F:structural constituent of ribosome"/>
    <property type="evidence" value="ECO:0007669"/>
    <property type="project" value="InterPro"/>
</dbReference>
<dbReference type="GO" id="GO:0006412">
    <property type="term" value="P:translation"/>
    <property type="evidence" value="ECO:0007669"/>
    <property type="project" value="UniProtKB-UniRule"/>
</dbReference>
<dbReference type="CDD" id="cd02412">
    <property type="entry name" value="KH-II_30S_S3"/>
    <property type="match status" value="1"/>
</dbReference>
<dbReference type="FunFam" id="3.30.1140.32:FF:000002">
    <property type="entry name" value="30S ribosomal protein S3"/>
    <property type="match status" value="1"/>
</dbReference>
<dbReference type="FunFam" id="3.30.300.20:FF:000001">
    <property type="entry name" value="30S ribosomal protein S3"/>
    <property type="match status" value="1"/>
</dbReference>
<dbReference type="Gene3D" id="3.30.300.20">
    <property type="match status" value="1"/>
</dbReference>
<dbReference type="Gene3D" id="3.30.1140.32">
    <property type="entry name" value="Ribosomal protein S3, C-terminal domain"/>
    <property type="match status" value="1"/>
</dbReference>
<dbReference type="HAMAP" id="MF_01309_B">
    <property type="entry name" value="Ribosomal_uS3_B"/>
    <property type="match status" value="1"/>
</dbReference>
<dbReference type="InterPro" id="IPR004087">
    <property type="entry name" value="KH_dom"/>
</dbReference>
<dbReference type="InterPro" id="IPR015946">
    <property type="entry name" value="KH_dom-like_a/b"/>
</dbReference>
<dbReference type="InterPro" id="IPR004044">
    <property type="entry name" value="KH_dom_type_2"/>
</dbReference>
<dbReference type="InterPro" id="IPR009019">
    <property type="entry name" value="KH_sf_prok-type"/>
</dbReference>
<dbReference type="InterPro" id="IPR036419">
    <property type="entry name" value="Ribosomal_S3_C_sf"/>
</dbReference>
<dbReference type="InterPro" id="IPR005704">
    <property type="entry name" value="Ribosomal_uS3_bac-typ"/>
</dbReference>
<dbReference type="InterPro" id="IPR001351">
    <property type="entry name" value="Ribosomal_uS3_C"/>
</dbReference>
<dbReference type="InterPro" id="IPR018280">
    <property type="entry name" value="Ribosomal_uS3_CS"/>
</dbReference>
<dbReference type="NCBIfam" id="TIGR01009">
    <property type="entry name" value="rpsC_bact"/>
    <property type="match status" value="1"/>
</dbReference>
<dbReference type="PANTHER" id="PTHR11760">
    <property type="entry name" value="30S/40S RIBOSOMAL PROTEIN S3"/>
    <property type="match status" value="1"/>
</dbReference>
<dbReference type="PANTHER" id="PTHR11760:SF19">
    <property type="entry name" value="SMALL RIBOSOMAL SUBUNIT PROTEIN US3C"/>
    <property type="match status" value="1"/>
</dbReference>
<dbReference type="Pfam" id="PF07650">
    <property type="entry name" value="KH_2"/>
    <property type="match status" value="1"/>
</dbReference>
<dbReference type="Pfam" id="PF00189">
    <property type="entry name" value="Ribosomal_S3_C"/>
    <property type="match status" value="1"/>
</dbReference>
<dbReference type="SMART" id="SM00322">
    <property type="entry name" value="KH"/>
    <property type="match status" value="1"/>
</dbReference>
<dbReference type="SUPFAM" id="SSF54814">
    <property type="entry name" value="Prokaryotic type KH domain (KH-domain type II)"/>
    <property type="match status" value="1"/>
</dbReference>
<dbReference type="SUPFAM" id="SSF54821">
    <property type="entry name" value="Ribosomal protein S3 C-terminal domain"/>
    <property type="match status" value="1"/>
</dbReference>
<dbReference type="PROSITE" id="PS50823">
    <property type="entry name" value="KH_TYPE_2"/>
    <property type="match status" value="1"/>
</dbReference>
<dbReference type="PROSITE" id="PS00548">
    <property type="entry name" value="RIBOSOMAL_S3"/>
    <property type="match status" value="1"/>
</dbReference>